<sequence>MKSDSIKKGPGKAAQRSLLKALGLTNEEISRPIIGIVSSQNEIIPGHMNLDKITEAVRKGVLMSGGTPLVVPTIGVCDGIAMGHEGMKYSLVTRELIADSIECMVKAHAFDALVLIPNCDKIVPGMVMAALRVNVPAVVISGGPMLAGKHKGKDISLTTMFEAVGSYENGTMDEKELCDLEECACPTCGSCSGMFTANSMNCLCEVLGIALPGNGTIPAVFSERIRLAKKAGMAVMDMLKNDIKPRDIINERSIMNALKADMALGCSTNSVLHITAIANEAKVNMNLDIINDLSSKTPDLCKLAPASNIHIENLYAAGGITAIMNELSKKDILDLNCITVTGKTQGENIKGVTVKDYEVIRPIDNPYSENGGIAILRGNLAPDGAVVKRAAVLPKMLVHEGPARVFNSEEEANTAIFDKTINPGDVIVIRYEGPKGGPGMREMLQATAAIAGMGLDDSVALITDGRFSGATRGASIGHVSPEAASGGMIGLLENGDIISIDINNAKLEVKLSDEEIKRRKLNFKPLEPKVKEGYLSRYAKLVSSASEGAILK</sequence>
<feature type="chain" id="PRO_1000089376" description="Dihydroxy-acid dehydratase">
    <location>
        <begin position="1"/>
        <end position="552"/>
    </location>
</feature>
<feature type="active site" description="Proton acceptor" evidence="1">
    <location>
        <position position="468"/>
    </location>
</feature>
<feature type="binding site" evidence="1">
    <location>
        <position position="78"/>
    </location>
    <ligand>
        <name>Mg(2+)</name>
        <dbReference type="ChEBI" id="CHEBI:18420"/>
    </ligand>
</feature>
<feature type="binding site" evidence="1">
    <location>
        <position position="119"/>
    </location>
    <ligand>
        <name>[2Fe-2S] cluster</name>
        <dbReference type="ChEBI" id="CHEBI:190135"/>
    </ligand>
</feature>
<feature type="binding site" evidence="1">
    <location>
        <position position="120"/>
    </location>
    <ligand>
        <name>Mg(2+)</name>
        <dbReference type="ChEBI" id="CHEBI:18420"/>
    </ligand>
</feature>
<feature type="binding site" description="via carbamate group" evidence="1">
    <location>
        <position position="121"/>
    </location>
    <ligand>
        <name>Mg(2+)</name>
        <dbReference type="ChEBI" id="CHEBI:18420"/>
    </ligand>
</feature>
<feature type="binding site" evidence="1">
    <location>
        <position position="191"/>
    </location>
    <ligand>
        <name>[2Fe-2S] cluster</name>
        <dbReference type="ChEBI" id="CHEBI:190135"/>
    </ligand>
</feature>
<feature type="binding site" evidence="1">
    <location>
        <position position="442"/>
    </location>
    <ligand>
        <name>Mg(2+)</name>
        <dbReference type="ChEBI" id="CHEBI:18420"/>
    </ligand>
</feature>
<feature type="modified residue" description="N6-carboxylysine" evidence="1">
    <location>
        <position position="121"/>
    </location>
</feature>
<evidence type="ECO:0000255" key="1">
    <source>
        <dbReference type="HAMAP-Rule" id="MF_00012"/>
    </source>
</evidence>
<organism>
    <name type="scientific">Clostridium botulinum (strain Alaska E43 / Type E3)</name>
    <dbReference type="NCBI Taxonomy" id="508767"/>
    <lineage>
        <taxon>Bacteria</taxon>
        <taxon>Bacillati</taxon>
        <taxon>Bacillota</taxon>
        <taxon>Clostridia</taxon>
        <taxon>Eubacteriales</taxon>
        <taxon>Clostridiaceae</taxon>
        <taxon>Clostridium</taxon>
    </lineage>
</organism>
<name>ILVD_CLOBA</name>
<comment type="function">
    <text evidence="1">Functions in the biosynthesis of branched-chain amino acids. Catalyzes the dehydration of (2R,3R)-2,3-dihydroxy-3-methylpentanoate (2,3-dihydroxy-3-methylvalerate) into 2-oxo-3-methylpentanoate (2-oxo-3-methylvalerate) and of (2R)-2,3-dihydroxy-3-methylbutanoate (2,3-dihydroxyisovalerate) into 2-oxo-3-methylbutanoate (2-oxoisovalerate), the penultimate precursor to L-isoleucine and L-valine, respectively.</text>
</comment>
<comment type="catalytic activity">
    <reaction evidence="1">
        <text>(2R)-2,3-dihydroxy-3-methylbutanoate = 3-methyl-2-oxobutanoate + H2O</text>
        <dbReference type="Rhea" id="RHEA:24809"/>
        <dbReference type="ChEBI" id="CHEBI:11851"/>
        <dbReference type="ChEBI" id="CHEBI:15377"/>
        <dbReference type="ChEBI" id="CHEBI:49072"/>
        <dbReference type="EC" id="4.2.1.9"/>
    </reaction>
    <physiologicalReaction direction="left-to-right" evidence="1">
        <dbReference type="Rhea" id="RHEA:24810"/>
    </physiologicalReaction>
</comment>
<comment type="catalytic activity">
    <reaction evidence="1">
        <text>(2R,3R)-2,3-dihydroxy-3-methylpentanoate = (S)-3-methyl-2-oxopentanoate + H2O</text>
        <dbReference type="Rhea" id="RHEA:27694"/>
        <dbReference type="ChEBI" id="CHEBI:15377"/>
        <dbReference type="ChEBI" id="CHEBI:35146"/>
        <dbReference type="ChEBI" id="CHEBI:49258"/>
        <dbReference type="EC" id="4.2.1.9"/>
    </reaction>
    <physiologicalReaction direction="left-to-right" evidence="1">
        <dbReference type="Rhea" id="RHEA:27695"/>
    </physiologicalReaction>
</comment>
<comment type="cofactor">
    <cofactor evidence="1">
        <name>[2Fe-2S] cluster</name>
        <dbReference type="ChEBI" id="CHEBI:190135"/>
    </cofactor>
    <text evidence="1">Binds 1 [2Fe-2S] cluster per subunit. This cluster acts as a Lewis acid cofactor.</text>
</comment>
<comment type="cofactor">
    <cofactor evidence="1">
        <name>Mg(2+)</name>
        <dbReference type="ChEBI" id="CHEBI:18420"/>
    </cofactor>
</comment>
<comment type="pathway">
    <text evidence="1">Amino-acid biosynthesis; L-isoleucine biosynthesis; L-isoleucine from 2-oxobutanoate: step 3/4.</text>
</comment>
<comment type="pathway">
    <text evidence="1">Amino-acid biosynthesis; L-valine biosynthesis; L-valine from pyruvate: step 3/4.</text>
</comment>
<comment type="subunit">
    <text evidence="1">Homodimer.</text>
</comment>
<comment type="similarity">
    <text evidence="1">Belongs to the IlvD/Edd family.</text>
</comment>
<reference key="1">
    <citation type="submission" date="2008-05" db="EMBL/GenBank/DDBJ databases">
        <title>Complete genome sequence of Clostridium botulinum E3 str. Alaska E43.</title>
        <authorList>
            <person name="Brinkac L.M."/>
            <person name="Brown J.L."/>
            <person name="Bruce D."/>
            <person name="Detter C."/>
            <person name="Munk C."/>
            <person name="Smith L.A."/>
            <person name="Smith T.J."/>
            <person name="Sutton G."/>
            <person name="Brettin T.S."/>
        </authorList>
    </citation>
    <scope>NUCLEOTIDE SEQUENCE [LARGE SCALE GENOMIC DNA]</scope>
    <source>
        <strain>Alaska E43 / Type E3</strain>
    </source>
</reference>
<proteinExistence type="inferred from homology"/>
<dbReference type="EC" id="4.2.1.9" evidence="1"/>
<dbReference type="EMBL" id="CP001078">
    <property type="protein sequence ID" value="ACD52522.1"/>
    <property type="molecule type" value="Genomic_DNA"/>
</dbReference>
<dbReference type="RefSeq" id="WP_012450650.1">
    <property type="nucleotide sequence ID" value="NC_010723.1"/>
</dbReference>
<dbReference type="SMR" id="B2UYT6"/>
<dbReference type="KEGG" id="cbt:CLH_0306"/>
<dbReference type="HOGENOM" id="CLU_014271_4_2_9"/>
<dbReference type="UniPathway" id="UPA00047">
    <property type="reaction ID" value="UER00057"/>
</dbReference>
<dbReference type="UniPathway" id="UPA00049">
    <property type="reaction ID" value="UER00061"/>
</dbReference>
<dbReference type="GO" id="GO:0005829">
    <property type="term" value="C:cytosol"/>
    <property type="evidence" value="ECO:0007669"/>
    <property type="project" value="TreeGrafter"/>
</dbReference>
<dbReference type="GO" id="GO:0051537">
    <property type="term" value="F:2 iron, 2 sulfur cluster binding"/>
    <property type="evidence" value="ECO:0007669"/>
    <property type="project" value="UniProtKB-UniRule"/>
</dbReference>
<dbReference type="GO" id="GO:0004160">
    <property type="term" value="F:dihydroxy-acid dehydratase activity"/>
    <property type="evidence" value="ECO:0007669"/>
    <property type="project" value="UniProtKB-UniRule"/>
</dbReference>
<dbReference type="GO" id="GO:0000287">
    <property type="term" value="F:magnesium ion binding"/>
    <property type="evidence" value="ECO:0007669"/>
    <property type="project" value="UniProtKB-UniRule"/>
</dbReference>
<dbReference type="GO" id="GO:0009097">
    <property type="term" value="P:isoleucine biosynthetic process"/>
    <property type="evidence" value="ECO:0007669"/>
    <property type="project" value="UniProtKB-UniRule"/>
</dbReference>
<dbReference type="GO" id="GO:0009099">
    <property type="term" value="P:L-valine biosynthetic process"/>
    <property type="evidence" value="ECO:0007669"/>
    <property type="project" value="UniProtKB-UniRule"/>
</dbReference>
<dbReference type="FunFam" id="3.50.30.80:FF:000001">
    <property type="entry name" value="Dihydroxy-acid dehydratase"/>
    <property type="match status" value="1"/>
</dbReference>
<dbReference type="Gene3D" id="3.50.30.80">
    <property type="entry name" value="IlvD/EDD C-terminal domain-like"/>
    <property type="match status" value="1"/>
</dbReference>
<dbReference type="HAMAP" id="MF_00012">
    <property type="entry name" value="IlvD"/>
    <property type="match status" value="1"/>
</dbReference>
<dbReference type="InterPro" id="IPR042096">
    <property type="entry name" value="Dihydro-acid_dehy_C"/>
</dbReference>
<dbReference type="InterPro" id="IPR004404">
    <property type="entry name" value="DihydroxyA_deHydtase"/>
</dbReference>
<dbReference type="InterPro" id="IPR020558">
    <property type="entry name" value="DiOHA_6PGluconate_deHydtase_CS"/>
</dbReference>
<dbReference type="InterPro" id="IPR056740">
    <property type="entry name" value="ILV_EDD_C"/>
</dbReference>
<dbReference type="InterPro" id="IPR000581">
    <property type="entry name" value="ILV_EDD_N"/>
</dbReference>
<dbReference type="InterPro" id="IPR037237">
    <property type="entry name" value="IlvD/EDD_N"/>
</dbReference>
<dbReference type="NCBIfam" id="TIGR00110">
    <property type="entry name" value="ilvD"/>
    <property type="match status" value="1"/>
</dbReference>
<dbReference type="NCBIfam" id="NF002068">
    <property type="entry name" value="PRK00911.1"/>
    <property type="match status" value="1"/>
</dbReference>
<dbReference type="PANTHER" id="PTHR43661">
    <property type="entry name" value="D-XYLONATE DEHYDRATASE"/>
    <property type="match status" value="1"/>
</dbReference>
<dbReference type="PANTHER" id="PTHR43661:SF3">
    <property type="entry name" value="D-XYLONATE DEHYDRATASE YAGF-RELATED"/>
    <property type="match status" value="1"/>
</dbReference>
<dbReference type="Pfam" id="PF24877">
    <property type="entry name" value="ILV_EDD_C"/>
    <property type="match status" value="1"/>
</dbReference>
<dbReference type="Pfam" id="PF00920">
    <property type="entry name" value="ILVD_EDD_N"/>
    <property type="match status" value="1"/>
</dbReference>
<dbReference type="SUPFAM" id="SSF143975">
    <property type="entry name" value="IlvD/EDD N-terminal domain-like"/>
    <property type="match status" value="1"/>
</dbReference>
<dbReference type="SUPFAM" id="SSF52016">
    <property type="entry name" value="LeuD/IlvD-like"/>
    <property type="match status" value="1"/>
</dbReference>
<dbReference type="PROSITE" id="PS00886">
    <property type="entry name" value="ILVD_EDD_1"/>
    <property type="match status" value="1"/>
</dbReference>
<dbReference type="PROSITE" id="PS00887">
    <property type="entry name" value="ILVD_EDD_2"/>
    <property type="match status" value="1"/>
</dbReference>
<gene>
    <name evidence="1" type="primary">ilvD</name>
    <name type="ordered locus">CLH_0306</name>
</gene>
<accession>B2UYT6</accession>
<keyword id="KW-0001">2Fe-2S</keyword>
<keyword id="KW-0028">Amino-acid biosynthesis</keyword>
<keyword id="KW-0100">Branched-chain amino acid biosynthesis</keyword>
<keyword id="KW-0408">Iron</keyword>
<keyword id="KW-0411">Iron-sulfur</keyword>
<keyword id="KW-0456">Lyase</keyword>
<keyword id="KW-0460">Magnesium</keyword>
<keyword id="KW-0479">Metal-binding</keyword>
<protein>
    <recommendedName>
        <fullName evidence="1">Dihydroxy-acid dehydratase</fullName>
        <shortName evidence="1">DAD</shortName>
        <ecNumber evidence="1">4.2.1.9</ecNumber>
    </recommendedName>
</protein>